<name>RNY_CLOTE</name>
<reference key="1">
    <citation type="journal article" date="2003" name="Proc. Natl. Acad. Sci. U.S.A.">
        <title>The genome sequence of Clostridium tetani, the causative agent of tetanus disease.</title>
        <authorList>
            <person name="Brueggemann H."/>
            <person name="Baeumer S."/>
            <person name="Fricke W.F."/>
            <person name="Wiezer A."/>
            <person name="Liesegang H."/>
            <person name="Decker I."/>
            <person name="Herzberg C."/>
            <person name="Martinez-Arias R."/>
            <person name="Merkl R."/>
            <person name="Henne A."/>
            <person name="Gottschalk G."/>
        </authorList>
    </citation>
    <scope>NUCLEOTIDE SEQUENCE [LARGE SCALE GENOMIC DNA]</scope>
    <source>
        <strain>Massachusetts / E88</strain>
    </source>
</reference>
<evidence type="ECO:0000255" key="1">
    <source>
        <dbReference type="HAMAP-Rule" id="MF_00335"/>
    </source>
</evidence>
<evidence type="ECO:0000255" key="2">
    <source>
        <dbReference type="PROSITE-ProRule" id="PRU01175"/>
    </source>
</evidence>
<protein>
    <recommendedName>
        <fullName evidence="1">Ribonuclease Y</fullName>
        <shortName evidence="1">RNase Y</shortName>
        <ecNumber evidence="1">3.1.-.-</ecNumber>
    </recommendedName>
</protein>
<organism>
    <name type="scientific">Clostridium tetani (strain Massachusetts / E88)</name>
    <dbReference type="NCBI Taxonomy" id="212717"/>
    <lineage>
        <taxon>Bacteria</taxon>
        <taxon>Bacillati</taxon>
        <taxon>Bacillota</taxon>
        <taxon>Clostridia</taxon>
        <taxon>Eubacteriales</taxon>
        <taxon>Clostridiaceae</taxon>
        <taxon>Clostridium</taxon>
    </lineage>
</organism>
<comment type="function">
    <text evidence="1">Endoribonuclease that initiates mRNA decay.</text>
</comment>
<comment type="subcellular location">
    <subcellularLocation>
        <location evidence="1">Cell membrane</location>
        <topology evidence="1">Single-pass membrane protein</topology>
    </subcellularLocation>
</comment>
<comment type="similarity">
    <text evidence="1">Belongs to the RNase Y family.</text>
</comment>
<proteinExistence type="inferred from homology"/>
<gene>
    <name evidence="1" type="primary">rny</name>
    <name type="ordered locus">CTC_01290</name>
</gene>
<keyword id="KW-1003">Cell membrane</keyword>
<keyword id="KW-0255">Endonuclease</keyword>
<keyword id="KW-0378">Hydrolase</keyword>
<keyword id="KW-0472">Membrane</keyword>
<keyword id="KW-0540">Nuclease</keyword>
<keyword id="KW-1185">Reference proteome</keyword>
<keyword id="KW-0694">RNA-binding</keyword>
<keyword id="KW-0812">Transmembrane</keyword>
<keyword id="KW-1133">Transmembrane helix</keyword>
<accession>Q895I4</accession>
<dbReference type="EC" id="3.1.-.-" evidence="1"/>
<dbReference type="EMBL" id="AE015927">
    <property type="protein sequence ID" value="AAO35856.1"/>
    <property type="molecule type" value="Genomic_DNA"/>
</dbReference>
<dbReference type="SMR" id="Q895I4"/>
<dbReference type="STRING" id="212717.CTC_01290"/>
<dbReference type="KEGG" id="ctc:CTC_01290"/>
<dbReference type="HOGENOM" id="CLU_028328_1_0_9"/>
<dbReference type="Proteomes" id="UP000001412">
    <property type="component" value="Chromosome"/>
</dbReference>
<dbReference type="GO" id="GO:0005886">
    <property type="term" value="C:plasma membrane"/>
    <property type="evidence" value="ECO:0007669"/>
    <property type="project" value="UniProtKB-SubCell"/>
</dbReference>
<dbReference type="GO" id="GO:0003723">
    <property type="term" value="F:RNA binding"/>
    <property type="evidence" value="ECO:0007669"/>
    <property type="project" value="UniProtKB-UniRule"/>
</dbReference>
<dbReference type="GO" id="GO:0004521">
    <property type="term" value="F:RNA endonuclease activity"/>
    <property type="evidence" value="ECO:0007669"/>
    <property type="project" value="UniProtKB-UniRule"/>
</dbReference>
<dbReference type="GO" id="GO:0006402">
    <property type="term" value="P:mRNA catabolic process"/>
    <property type="evidence" value="ECO:0007669"/>
    <property type="project" value="UniProtKB-UniRule"/>
</dbReference>
<dbReference type="CDD" id="cd00077">
    <property type="entry name" value="HDc"/>
    <property type="match status" value="1"/>
</dbReference>
<dbReference type="CDD" id="cd22431">
    <property type="entry name" value="KH-I_RNaseY"/>
    <property type="match status" value="1"/>
</dbReference>
<dbReference type="FunFam" id="1.10.3210.10:FF:000003">
    <property type="entry name" value="Ribonuclease Y"/>
    <property type="match status" value="1"/>
</dbReference>
<dbReference type="FunFam" id="3.30.1370.10:FF:000006">
    <property type="entry name" value="Ribonuclease Y"/>
    <property type="match status" value="1"/>
</dbReference>
<dbReference type="Gene3D" id="1.10.3210.10">
    <property type="entry name" value="Hypothetical protein af1432"/>
    <property type="match status" value="1"/>
</dbReference>
<dbReference type="Gene3D" id="3.30.1370.10">
    <property type="entry name" value="K Homology domain, type 1"/>
    <property type="match status" value="1"/>
</dbReference>
<dbReference type="HAMAP" id="MF_00335">
    <property type="entry name" value="RNase_Y"/>
    <property type="match status" value="1"/>
</dbReference>
<dbReference type="InterPro" id="IPR003607">
    <property type="entry name" value="HD/PDEase_dom"/>
</dbReference>
<dbReference type="InterPro" id="IPR006674">
    <property type="entry name" value="HD_domain"/>
</dbReference>
<dbReference type="InterPro" id="IPR006675">
    <property type="entry name" value="HDIG_dom"/>
</dbReference>
<dbReference type="InterPro" id="IPR004087">
    <property type="entry name" value="KH_dom"/>
</dbReference>
<dbReference type="InterPro" id="IPR004088">
    <property type="entry name" value="KH_dom_type_1"/>
</dbReference>
<dbReference type="InterPro" id="IPR036612">
    <property type="entry name" value="KH_dom_type_1_sf"/>
</dbReference>
<dbReference type="InterPro" id="IPR017705">
    <property type="entry name" value="Ribonuclease_Y"/>
</dbReference>
<dbReference type="InterPro" id="IPR022711">
    <property type="entry name" value="RNase_Y_N"/>
</dbReference>
<dbReference type="NCBIfam" id="TIGR00277">
    <property type="entry name" value="HDIG"/>
    <property type="match status" value="1"/>
</dbReference>
<dbReference type="NCBIfam" id="TIGR03319">
    <property type="entry name" value="RNase_Y"/>
    <property type="match status" value="1"/>
</dbReference>
<dbReference type="PANTHER" id="PTHR12826">
    <property type="entry name" value="RIBONUCLEASE Y"/>
    <property type="match status" value="1"/>
</dbReference>
<dbReference type="PANTHER" id="PTHR12826:SF15">
    <property type="entry name" value="RIBONUCLEASE Y"/>
    <property type="match status" value="1"/>
</dbReference>
<dbReference type="Pfam" id="PF01966">
    <property type="entry name" value="HD"/>
    <property type="match status" value="1"/>
</dbReference>
<dbReference type="Pfam" id="PF00013">
    <property type="entry name" value="KH_1"/>
    <property type="match status" value="1"/>
</dbReference>
<dbReference type="Pfam" id="PF12072">
    <property type="entry name" value="RNase_Y_N"/>
    <property type="match status" value="1"/>
</dbReference>
<dbReference type="SMART" id="SM00471">
    <property type="entry name" value="HDc"/>
    <property type="match status" value="1"/>
</dbReference>
<dbReference type="SMART" id="SM00322">
    <property type="entry name" value="KH"/>
    <property type="match status" value="1"/>
</dbReference>
<dbReference type="SUPFAM" id="SSF54791">
    <property type="entry name" value="Eukaryotic type KH-domain (KH-domain type I)"/>
    <property type="match status" value="1"/>
</dbReference>
<dbReference type="SUPFAM" id="SSF109604">
    <property type="entry name" value="HD-domain/PDEase-like"/>
    <property type="match status" value="1"/>
</dbReference>
<dbReference type="PROSITE" id="PS51831">
    <property type="entry name" value="HD"/>
    <property type="match status" value="1"/>
</dbReference>
<dbReference type="PROSITE" id="PS50084">
    <property type="entry name" value="KH_TYPE_1"/>
    <property type="match status" value="1"/>
</dbReference>
<feature type="chain" id="PRO_0000344856" description="Ribonuclease Y">
    <location>
        <begin position="1"/>
        <end position="523"/>
    </location>
</feature>
<feature type="transmembrane region" description="Helical" evidence="1">
    <location>
        <begin position="28"/>
        <end position="48"/>
    </location>
</feature>
<feature type="domain" description="KH" evidence="1">
    <location>
        <begin position="227"/>
        <end position="312"/>
    </location>
</feature>
<feature type="domain" description="HD" evidence="2">
    <location>
        <begin position="353"/>
        <end position="446"/>
    </location>
</feature>
<sequence length="523" mass="59445">MTLSKLLYLSAIDYLNTKSKGGAHLNLTYYIVATIIIAVIAVYVDYYIRKNVSAAKISNAEEKGRNIIEDAKREAESKKKEAILEAKEEMHRLRNDFEKESKDRRNEIQRLERRIIQREEALDKKGDMLEKKEESLNKKHQELENKKSNIENLYEKQREELERLAGLTSDQAKEMLLEEVRKEIKHETAMLIKEVETKAKEEADKKAREITTYAIQRCAADHVAETTVYVVNLPNDEMKGRIIGREGRNIRTLETLTGVDLIIDDTPEAVILSAFDPVRREVARIALEKLIMDGRIHPARIEEMVEKAKKEVENNIREEGEQATFETSVHGLHSELIKLLGRLKYRTSYGQNVLKHSIEVSYLAGLMASELGMDPTLAKRAGLLHDIGKAVDHEVEGPHAIIGAEVAKRYHESSIVVNAIAAHHGDEEFESIEAILVQAADAISAARPGARRETLEAYIKRLEKLEEIANSYEGVEKSYAIQAGRELRIIVKPEVVDDAGSYEMARNMAKTIENELEYLVKLR</sequence>